<evidence type="ECO:0000255" key="1">
    <source>
        <dbReference type="HAMAP-Rule" id="MF_00539"/>
    </source>
</evidence>
<evidence type="ECO:0000256" key="2">
    <source>
        <dbReference type="SAM" id="MobiDB-lite"/>
    </source>
</evidence>
<evidence type="ECO:0000305" key="3"/>
<feature type="chain" id="PRO_1000017580" description="Large ribosomal subunit protein bL27">
    <location>
        <begin position="1"/>
        <end position="85"/>
    </location>
</feature>
<feature type="region of interest" description="Disordered" evidence="2">
    <location>
        <begin position="1"/>
        <end position="21"/>
    </location>
</feature>
<proteinExistence type="inferred from homology"/>
<name>RL27_RHORT</name>
<protein>
    <recommendedName>
        <fullName evidence="1">Large ribosomal subunit protein bL27</fullName>
    </recommendedName>
    <alternativeName>
        <fullName evidence="3">50S ribosomal protein L27</fullName>
    </alternativeName>
</protein>
<keyword id="KW-1185">Reference proteome</keyword>
<keyword id="KW-0687">Ribonucleoprotein</keyword>
<keyword id="KW-0689">Ribosomal protein</keyword>
<reference key="1">
    <citation type="journal article" date="2011" name="Stand. Genomic Sci.">
        <title>Complete genome sequence of Rhodospirillum rubrum type strain (S1).</title>
        <authorList>
            <person name="Munk A.C."/>
            <person name="Copeland A."/>
            <person name="Lucas S."/>
            <person name="Lapidus A."/>
            <person name="Del Rio T.G."/>
            <person name="Barry K."/>
            <person name="Detter J.C."/>
            <person name="Hammon N."/>
            <person name="Israni S."/>
            <person name="Pitluck S."/>
            <person name="Brettin T."/>
            <person name="Bruce D."/>
            <person name="Han C."/>
            <person name="Tapia R."/>
            <person name="Gilna P."/>
            <person name="Schmutz J."/>
            <person name="Larimer F."/>
            <person name="Land M."/>
            <person name="Kyrpides N.C."/>
            <person name="Mavromatis K."/>
            <person name="Richardson P."/>
            <person name="Rohde M."/>
            <person name="Goeker M."/>
            <person name="Klenk H.P."/>
            <person name="Zhang Y."/>
            <person name="Roberts G.P."/>
            <person name="Reslewic S."/>
            <person name="Schwartz D.C."/>
        </authorList>
    </citation>
    <scope>NUCLEOTIDE SEQUENCE [LARGE SCALE GENOMIC DNA]</scope>
    <source>
        <strain>ATCC 11170 / ATH 1.1.1 / DSM 467 / LMG 4362 / NCIMB 8255 / S1</strain>
    </source>
</reference>
<gene>
    <name evidence="1" type="primary">rpmA</name>
    <name type="ordered locus">Rru_A1241</name>
</gene>
<organism>
    <name type="scientific">Rhodospirillum rubrum (strain ATCC 11170 / ATH 1.1.1 / DSM 467 / LMG 4362 / NCIMB 8255 / S1)</name>
    <dbReference type="NCBI Taxonomy" id="269796"/>
    <lineage>
        <taxon>Bacteria</taxon>
        <taxon>Pseudomonadati</taxon>
        <taxon>Pseudomonadota</taxon>
        <taxon>Alphaproteobacteria</taxon>
        <taxon>Rhodospirillales</taxon>
        <taxon>Rhodospirillaceae</taxon>
        <taxon>Rhodospirillum</taxon>
    </lineage>
</organism>
<accession>Q2RV03</accession>
<sequence>MAHKKAGGSSRNGRDSEGRRLGVKKFGGEIVVSGNIILRQRGTKYHPGANVGLGKDHTIFATTPGNVKFHKGFRGRMFVSVVAEA</sequence>
<comment type="similarity">
    <text evidence="1">Belongs to the bacterial ribosomal protein bL27 family.</text>
</comment>
<dbReference type="EMBL" id="CP000230">
    <property type="protein sequence ID" value="ABC22042.1"/>
    <property type="molecule type" value="Genomic_DNA"/>
</dbReference>
<dbReference type="RefSeq" id="WP_011388996.1">
    <property type="nucleotide sequence ID" value="NC_007643.1"/>
</dbReference>
<dbReference type="RefSeq" id="YP_426329.1">
    <property type="nucleotide sequence ID" value="NC_007643.1"/>
</dbReference>
<dbReference type="SMR" id="Q2RV03"/>
<dbReference type="STRING" id="269796.Rru_A1241"/>
<dbReference type="EnsemblBacteria" id="ABC22042">
    <property type="protein sequence ID" value="ABC22042"/>
    <property type="gene ID" value="Rru_A1241"/>
</dbReference>
<dbReference type="KEGG" id="rru:Rru_A1241"/>
<dbReference type="PATRIC" id="fig|269796.9.peg.1306"/>
<dbReference type="eggNOG" id="COG0211">
    <property type="taxonomic scope" value="Bacteria"/>
</dbReference>
<dbReference type="HOGENOM" id="CLU_095424_4_1_5"/>
<dbReference type="PhylomeDB" id="Q2RV03"/>
<dbReference type="Proteomes" id="UP000001929">
    <property type="component" value="Chromosome"/>
</dbReference>
<dbReference type="GO" id="GO:0022625">
    <property type="term" value="C:cytosolic large ribosomal subunit"/>
    <property type="evidence" value="ECO:0007669"/>
    <property type="project" value="TreeGrafter"/>
</dbReference>
<dbReference type="GO" id="GO:0003735">
    <property type="term" value="F:structural constituent of ribosome"/>
    <property type="evidence" value="ECO:0007669"/>
    <property type="project" value="InterPro"/>
</dbReference>
<dbReference type="GO" id="GO:0006412">
    <property type="term" value="P:translation"/>
    <property type="evidence" value="ECO:0007669"/>
    <property type="project" value="UniProtKB-UniRule"/>
</dbReference>
<dbReference type="FunFam" id="2.40.50.100:FF:000020">
    <property type="entry name" value="50S ribosomal protein L27"/>
    <property type="match status" value="1"/>
</dbReference>
<dbReference type="Gene3D" id="2.40.50.100">
    <property type="match status" value="1"/>
</dbReference>
<dbReference type="HAMAP" id="MF_00539">
    <property type="entry name" value="Ribosomal_bL27"/>
    <property type="match status" value="1"/>
</dbReference>
<dbReference type="InterPro" id="IPR001684">
    <property type="entry name" value="Ribosomal_bL27"/>
</dbReference>
<dbReference type="InterPro" id="IPR018261">
    <property type="entry name" value="Ribosomal_bL27_CS"/>
</dbReference>
<dbReference type="NCBIfam" id="TIGR00062">
    <property type="entry name" value="L27"/>
    <property type="match status" value="1"/>
</dbReference>
<dbReference type="PANTHER" id="PTHR15893:SF0">
    <property type="entry name" value="LARGE RIBOSOMAL SUBUNIT PROTEIN BL27M"/>
    <property type="match status" value="1"/>
</dbReference>
<dbReference type="PANTHER" id="PTHR15893">
    <property type="entry name" value="RIBOSOMAL PROTEIN L27"/>
    <property type="match status" value="1"/>
</dbReference>
<dbReference type="Pfam" id="PF01016">
    <property type="entry name" value="Ribosomal_L27"/>
    <property type="match status" value="1"/>
</dbReference>
<dbReference type="PRINTS" id="PR00063">
    <property type="entry name" value="RIBOSOMALL27"/>
</dbReference>
<dbReference type="SUPFAM" id="SSF110324">
    <property type="entry name" value="Ribosomal L27 protein-like"/>
    <property type="match status" value="1"/>
</dbReference>
<dbReference type="PROSITE" id="PS00831">
    <property type="entry name" value="RIBOSOMAL_L27"/>
    <property type="match status" value="1"/>
</dbReference>